<proteinExistence type="evidence at protein level"/>
<dbReference type="GO" id="GO:0005576">
    <property type="term" value="C:extracellular region"/>
    <property type="evidence" value="ECO:0007669"/>
    <property type="project" value="UniProtKB-SubCell"/>
</dbReference>
<dbReference type="GO" id="GO:0007218">
    <property type="term" value="P:neuropeptide signaling pathway"/>
    <property type="evidence" value="ECO:0007669"/>
    <property type="project" value="UniProtKB-KW"/>
</dbReference>
<sequence length="9" mass="1077">ARSDNFVRL</sequence>
<keyword id="KW-0027">Amidation</keyword>
<keyword id="KW-0903">Direct protein sequencing</keyword>
<keyword id="KW-0527">Neuropeptide</keyword>
<keyword id="KW-0964">Secreted</keyword>
<protein>
    <recommendedName>
        <fullName evidence="4">Extended FMRFamide-7</fullName>
        <shortName evidence="4">FMRFa-7</shortName>
    </recommendedName>
</protein>
<accession>B3A086</accession>
<comment type="function">
    <text evidence="1">FMRFamides and FMRFamide-like peptides are neuropeptides.</text>
</comment>
<comment type="subcellular location">
    <subcellularLocation>
        <location evidence="6">Secreted</location>
    </subcellularLocation>
</comment>
<comment type="similarity">
    <text evidence="2">Belongs to the FARP (FMRF amide related peptide) family.</text>
</comment>
<evidence type="ECO:0000250" key="1">
    <source>
        <dbReference type="UniProtKB" id="P34405"/>
    </source>
</evidence>
<evidence type="ECO:0000255" key="2"/>
<evidence type="ECO:0000269" key="3">
    <source>
    </source>
</evidence>
<evidence type="ECO:0000303" key="4">
    <source>
    </source>
</evidence>
<evidence type="ECO:0000305" key="5"/>
<evidence type="ECO:0000305" key="6">
    <source>
    </source>
</evidence>
<feature type="peptide" id="PRO_0000421525" description="Extended FMRFamide-7" evidence="3">
    <location>
        <begin position="1"/>
        <end position="9"/>
    </location>
</feature>
<feature type="modified residue" description="Leucine amide" evidence="3">
    <location>
        <position position="9"/>
    </location>
</feature>
<feature type="unsure residue" description="L or I" evidence="3">
    <location>
        <position position="9"/>
    </location>
</feature>
<organism>
    <name type="scientific">Lobatophasma redelinghuysense</name>
    <name type="common">Gladiator</name>
    <name type="synonym">Heel-walker</name>
    <dbReference type="NCBI Taxonomy" id="253128"/>
    <lineage>
        <taxon>Eukaryota</taxon>
        <taxon>Metazoa</taxon>
        <taxon>Ecdysozoa</taxon>
        <taxon>Arthropoda</taxon>
        <taxon>Hexapoda</taxon>
        <taxon>Insecta</taxon>
        <taxon>Pterygota</taxon>
        <taxon>Neoptera</taxon>
        <taxon>Polyneoptera</taxon>
        <taxon>Mantophasmatodea</taxon>
        <taxon>Austrophasmatidae</taxon>
        <taxon>Lobatophasma</taxon>
    </lineage>
</organism>
<reference evidence="5" key="1">
    <citation type="journal article" date="2012" name="Syst. Biol.">
        <title>Peptidomics-based phylogeny and biogeography of Mantophasmatodea (Hexapoda).</title>
        <authorList>
            <person name="Predel R."/>
            <person name="Neupert S."/>
            <person name="Huetteroth W."/>
            <person name="Kahnt J."/>
            <person name="Waidelich D."/>
            <person name="Roth S."/>
        </authorList>
    </citation>
    <scope>PROTEIN SEQUENCE</scope>
    <scope>AMIDATION AT LEU-9</scope>
    <source>
        <tissue evidence="3">Thoracic perisympathetic organs</tissue>
    </source>
</reference>
<name>FAR7_LOBRE</name>